<proteinExistence type="inferred from homology"/>
<sequence>MENKYTHGVLFYHEHSGLKNINQGIGEVTTALSSICKHLSIQLSENEGDIIKYCQEIKTKNYAKDVDILFILGGDGTVNELINGVMTHDLQLPIGILPGGTFNDFTKTLNIAPNHKQASEQMISAQVGTYDVIKINNQYALNFVGLGLIVQNAENVQDGSKDIFGKLSYIGSTVKTLLNPTQFNYQLSIDDKTYSGETTMILTANGPFIGGSRIPLTDLSPQDGELNTFIFNEQSFSILNDIFKKRDSMNWNEITQGIEHIPGKKISLTTDPAMKVDIDGEISLETPIDIEVIPNAIQLLTVNDL</sequence>
<evidence type="ECO:0000250" key="1"/>
<evidence type="ECO:0000255" key="2">
    <source>
        <dbReference type="PROSITE-ProRule" id="PRU00783"/>
    </source>
</evidence>
<evidence type="ECO:0000305" key="3"/>
<organism>
    <name type="scientific">Staphylococcus aureus (strain Newman)</name>
    <dbReference type="NCBI Taxonomy" id="426430"/>
    <lineage>
        <taxon>Bacteria</taxon>
        <taxon>Bacillati</taxon>
        <taxon>Bacillota</taxon>
        <taxon>Bacilli</taxon>
        <taxon>Bacillales</taxon>
        <taxon>Staphylococcaceae</taxon>
        <taxon>Staphylococcus</taxon>
    </lineage>
</organism>
<accession>A6QF35</accession>
<dbReference type="EC" id="2.7.1.-"/>
<dbReference type="EMBL" id="AP009351">
    <property type="protein sequence ID" value="BAF66967.1"/>
    <property type="molecule type" value="Genomic_DNA"/>
</dbReference>
<dbReference type="RefSeq" id="WP_000429014.1">
    <property type="nucleotide sequence ID" value="NZ_JBBIAE010000002.1"/>
</dbReference>
<dbReference type="SMR" id="A6QF35"/>
<dbReference type="KEGG" id="sae:NWMN_0695"/>
<dbReference type="HOGENOM" id="CLU_045532_1_0_9"/>
<dbReference type="Proteomes" id="UP000006386">
    <property type="component" value="Chromosome"/>
</dbReference>
<dbReference type="GO" id="GO:0005886">
    <property type="term" value="C:plasma membrane"/>
    <property type="evidence" value="ECO:0007669"/>
    <property type="project" value="TreeGrafter"/>
</dbReference>
<dbReference type="GO" id="GO:0005524">
    <property type="term" value="F:ATP binding"/>
    <property type="evidence" value="ECO:0007669"/>
    <property type="project" value="UniProtKB-KW"/>
</dbReference>
<dbReference type="GO" id="GO:0004143">
    <property type="term" value="F:ATP-dependent diacylglycerol kinase activity"/>
    <property type="evidence" value="ECO:0007669"/>
    <property type="project" value="TreeGrafter"/>
</dbReference>
<dbReference type="GO" id="GO:0046872">
    <property type="term" value="F:metal ion binding"/>
    <property type="evidence" value="ECO:0007669"/>
    <property type="project" value="UniProtKB-KW"/>
</dbReference>
<dbReference type="GO" id="GO:0008654">
    <property type="term" value="P:phospholipid biosynthetic process"/>
    <property type="evidence" value="ECO:0007669"/>
    <property type="project" value="UniProtKB-KW"/>
</dbReference>
<dbReference type="Gene3D" id="2.60.200.40">
    <property type="match status" value="1"/>
</dbReference>
<dbReference type="Gene3D" id="3.40.50.10330">
    <property type="entry name" value="Probable inorganic polyphosphate/atp-NAD kinase, domain 1"/>
    <property type="match status" value="1"/>
</dbReference>
<dbReference type="InterPro" id="IPR017438">
    <property type="entry name" value="ATP-NAD_kinase_N"/>
</dbReference>
<dbReference type="InterPro" id="IPR005218">
    <property type="entry name" value="Diacylglycerol/lipid_kinase"/>
</dbReference>
<dbReference type="InterPro" id="IPR001206">
    <property type="entry name" value="Diacylglycerol_kinase_cat_dom"/>
</dbReference>
<dbReference type="InterPro" id="IPR050187">
    <property type="entry name" value="Lipid_Phosphate_FormReg"/>
</dbReference>
<dbReference type="InterPro" id="IPR016064">
    <property type="entry name" value="NAD/diacylglycerol_kinase_sf"/>
</dbReference>
<dbReference type="InterPro" id="IPR045540">
    <property type="entry name" value="YegS/DAGK_C"/>
</dbReference>
<dbReference type="NCBIfam" id="TIGR00147">
    <property type="entry name" value="YegS/Rv2252/BmrU family lipid kinase"/>
    <property type="match status" value="1"/>
</dbReference>
<dbReference type="PANTHER" id="PTHR12358:SF106">
    <property type="entry name" value="LIPID KINASE YEGS"/>
    <property type="match status" value="1"/>
</dbReference>
<dbReference type="PANTHER" id="PTHR12358">
    <property type="entry name" value="SPHINGOSINE KINASE"/>
    <property type="match status" value="1"/>
</dbReference>
<dbReference type="Pfam" id="PF00781">
    <property type="entry name" value="DAGK_cat"/>
    <property type="match status" value="1"/>
</dbReference>
<dbReference type="Pfam" id="PF19279">
    <property type="entry name" value="YegS_C"/>
    <property type="match status" value="1"/>
</dbReference>
<dbReference type="SMART" id="SM00046">
    <property type="entry name" value="DAGKc"/>
    <property type="match status" value="1"/>
</dbReference>
<dbReference type="SUPFAM" id="SSF111331">
    <property type="entry name" value="NAD kinase/diacylglycerol kinase-like"/>
    <property type="match status" value="1"/>
</dbReference>
<dbReference type="PROSITE" id="PS50146">
    <property type="entry name" value="DAGK"/>
    <property type="match status" value="1"/>
</dbReference>
<reference key="1">
    <citation type="journal article" date="2008" name="J. Bacteriol.">
        <title>Genome sequence of Staphylococcus aureus strain Newman and comparative analysis of staphylococcal genomes: polymorphism and evolution of two major pathogenicity islands.</title>
        <authorList>
            <person name="Baba T."/>
            <person name="Bae T."/>
            <person name="Schneewind O."/>
            <person name="Takeuchi F."/>
            <person name="Hiramatsu K."/>
        </authorList>
    </citation>
    <scope>NUCLEOTIDE SEQUENCE [LARGE SCALE GENOMIC DNA]</scope>
    <source>
        <strain>Newman</strain>
    </source>
</reference>
<protein>
    <recommendedName>
        <fullName>Putative lipid kinase NWMN_0695</fullName>
        <ecNumber>2.7.1.-</ecNumber>
    </recommendedName>
</protein>
<keyword id="KW-0067">ATP-binding</keyword>
<keyword id="KW-0418">Kinase</keyword>
<keyword id="KW-0444">Lipid biosynthesis</keyword>
<keyword id="KW-0443">Lipid metabolism</keyword>
<keyword id="KW-0460">Magnesium</keyword>
<keyword id="KW-0479">Metal-binding</keyword>
<keyword id="KW-0547">Nucleotide-binding</keyword>
<keyword id="KW-0594">Phospholipid biosynthesis</keyword>
<keyword id="KW-1208">Phospholipid metabolism</keyword>
<keyword id="KW-0808">Transferase</keyword>
<name>Y695_STAAE</name>
<gene>
    <name type="ordered locus">NWMN_0695</name>
</gene>
<feature type="chain" id="PRO_0000386512" description="Putative lipid kinase NWMN_0695">
    <location>
        <begin position="1"/>
        <end position="305"/>
    </location>
</feature>
<feature type="domain" description="DAGKc" evidence="2">
    <location>
        <begin position="3"/>
        <end position="139"/>
    </location>
</feature>
<feature type="active site" description="Proton acceptor" evidence="1">
    <location>
        <position position="281"/>
    </location>
</feature>
<feature type="binding site" evidence="2">
    <location>
        <position position="44"/>
    </location>
    <ligand>
        <name>ATP</name>
        <dbReference type="ChEBI" id="CHEBI:30616"/>
    </ligand>
</feature>
<feature type="binding site" evidence="2">
    <location>
        <begin position="74"/>
        <end position="80"/>
    </location>
    <ligand>
        <name>ATP</name>
        <dbReference type="ChEBI" id="CHEBI:30616"/>
    </ligand>
</feature>
<feature type="binding site" evidence="2">
    <location>
        <position position="101"/>
    </location>
    <ligand>
        <name>ATP</name>
        <dbReference type="ChEBI" id="CHEBI:30616"/>
    </ligand>
</feature>
<feature type="binding site" evidence="1">
    <location>
        <position position="220"/>
    </location>
    <ligand>
        <name>Mg(2+)</name>
        <dbReference type="ChEBI" id="CHEBI:18420"/>
    </ligand>
</feature>
<feature type="binding site" evidence="1">
    <location>
        <position position="223"/>
    </location>
    <ligand>
        <name>Mg(2+)</name>
        <dbReference type="ChEBI" id="CHEBI:18420"/>
    </ligand>
</feature>
<feature type="binding site" evidence="1">
    <location>
        <position position="225"/>
    </location>
    <ligand>
        <name>Mg(2+)</name>
        <dbReference type="ChEBI" id="CHEBI:18420"/>
    </ligand>
</feature>
<comment type="function">
    <text evidence="1">May catalyze the ATP-dependent phosphorylation of lipids other than diacylglycerol (DAG).</text>
</comment>
<comment type="cofactor">
    <cofactor evidence="1">
        <name>Mg(2+)</name>
        <dbReference type="ChEBI" id="CHEBI:18420"/>
    </cofactor>
    <text evidence="1">Binds 1 Mg(2+) ion per subunit. This ion appears to have a structural role and is required for catalytic activity.</text>
</comment>
<comment type="similarity">
    <text evidence="3">Belongs to the diacylglycerol/lipid kinase family.</text>
</comment>